<gene>
    <name type="primary">PRM1</name>
    <name type="ORF">HCAG_01657</name>
</gene>
<sequence length="736" mass="81106">MKFSRFIPRSRTPGLPAYGEQEPNTFENGYRPSPPPGAITPYLGLRSRLSQIWFNRWTILLLLILARVLVAIGSLDGNLVSAKREALSACSSVESVGSTMASMPHYMAQGVNELTATGVEKAINGLMSMLELTVTGVEEIFVFFVNVMTQTYLCLITLVVSGMMNAAIDVLKKATEFLDDITGKLGNAIGDGISDFEDAINGFGDVINMFGTKLPKLNLDGPIKELENLSLPDGLTDDLNKLKEKIPNFEDVNNFTNNALRMPFELVKKLIRDEIDDYKFDRSVFPVPAKEQLQFCNEEGGIHSFFNKLASLTSTAKKIFIGVLVVSAILVCIPMAYREMRAWRGMKERSSLVRREAHDPMDVVYIVSRPFASAAGLKAATWFSGHRRQVLARWVVAYVTSPPALFLLSLGVAGLFSCACQAMLLTAVKKEVPSLTEQVGQFADKVFFALNNASEQWAVGTNRVIDDTNDDINQKVFGWVNQTTGSVNNTLNVFVDETSNVLNRTFGGTILYEPIKDVLHCLIGLKIEGVQKALTWVSVHAKVDFPNLANDTFSLRTLEKLSKDNDSNADSFLMNPGDKTTDKISEVVQRVTDSVESGIRTEAIISAVIISIWFAVLLMAIVRALTLWYGADKNRGDGSGDSEFPHPETLSRDAAGFSDIPLATPTHVSPGMADTSVPVYTTRPPAQAFNGGYNAEDYYQEQKLGFAGQRELRRDVEGHARKSSYGEVEYTNDVKR</sequence>
<comment type="function">
    <text evidence="1">Involved in cell fusion during mating by stabilizing the plasma membrane fusion event.</text>
</comment>
<comment type="subcellular location">
    <subcellularLocation>
        <location evidence="1">Cell membrane</location>
        <topology evidence="1">Multi-pass membrane protein</topology>
    </subcellularLocation>
</comment>
<comment type="similarity">
    <text evidence="4">Belongs to the PRM1 family.</text>
</comment>
<evidence type="ECO:0000250" key="1"/>
<evidence type="ECO:0000255" key="2"/>
<evidence type="ECO:0000256" key="3">
    <source>
        <dbReference type="SAM" id="MobiDB-lite"/>
    </source>
</evidence>
<evidence type="ECO:0000305" key="4"/>
<feature type="chain" id="PRO_0000337265" description="Plasma membrane fusion protein PRM1">
    <location>
        <begin position="1"/>
        <end position="736"/>
    </location>
</feature>
<feature type="topological domain" description="Extracellular" evidence="1">
    <location>
        <begin position="1"/>
        <end position="56"/>
    </location>
</feature>
<feature type="transmembrane region" description="Helical" evidence="2">
    <location>
        <begin position="57"/>
        <end position="77"/>
    </location>
</feature>
<feature type="topological domain" description="Cytoplasmic" evidence="1">
    <location>
        <begin position="78"/>
        <end position="139"/>
    </location>
</feature>
<feature type="transmembrane region" description="Helical" evidence="2">
    <location>
        <begin position="140"/>
        <end position="160"/>
    </location>
</feature>
<feature type="topological domain" description="Extracellular" evidence="1">
    <location>
        <begin position="161"/>
        <end position="315"/>
    </location>
</feature>
<feature type="transmembrane region" description="Helical" evidence="2">
    <location>
        <begin position="316"/>
        <end position="336"/>
    </location>
</feature>
<feature type="topological domain" description="Cytoplasmic" evidence="1">
    <location>
        <begin position="337"/>
        <end position="395"/>
    </location>
</feature>
<feature type="transmembrane region" description="Helical" evidence="2">
    <location>
        <begin position="396"/>
        <end position="416"/>
    </location>
</feature>
<feature type="topological domain" description="Extracellular" evidence="1">
    <location>
        <begin position="417"/>
        <end position="601"/>
    </location>
</feature>
<feature type="transmembrane region" description="Helical" evidence="2">
    <location>
        <begin position="602"/>
        <end position="622"/>
    </location>
</feature>
<feature type="topological domain" description="Cytoplasmic" evidence="1">
    <location>
        <begin position="623"/>
        <end position="736"/>
    </location>
</feature>
<feature type="region of interest" description="Disordered" evidence="3">
    <location>
        <begin position="1"/>
        <end position="33"/>
    </location>
</feature>
<feature type="region of interest" description="Disordered" evidence="3">
    <location>
        <begin position="717"/>
        <end position="736"/>
    </location>
</feature>
<feature type="glycosylation site" description="N-linked (GlcNAc...) asparagine" evidence="2">
    <location>
        <position position="228"/>
    </location>
</feature>
<feature type="glycosylation site" description="N-linked (GlcNAc...) asparagine" evidence="2">
    <location>
        <position position="254"/>
    </location>
</feature>
<feature type="glycosylation site" description="N-linked (GlcNAc...) asparagine" evidence="2">
    <location>
        <position position="452"/>
    </location>
</feature>
<feature type="glycosylation site" description="N-linked (GlcNAc...) asparagine" evidence="2">
    <location>
        <position position="481"/>
    </location>
</feature>
<feature type="glycosylation site" description="N-linked (GlcNAc...) asparagine" evidence="2">
    <location>
        <position position="488"/>
    </location>
</feature>
<feature type="glycosylation site" description="N-linked (GlcNAc...) asparagine" evidence="2">
    <location>
        <position position="503"/>
    </location>
</feature>
<feature type="glycosylation site" description="N-linked (GlcNAc...) asparagine" evidence="2">
    <location>
        <position position="550"/>
    </location>
</feature>
<feature type="glycosylation site" description="N-linked (GlcNAc...) asparagine" evidence="2">
    <location>
        <position position="565"/>
    </location>
</feature>
<reference key="1">
    <citation type="journal article" date="2009" name="Genome Res.">
        <title>Comparative genomic analyses of the human fungal pathogens Coccidioides and their relatives.</title>
        <authorList>
            <person name="Sharpton T.J."/>
            <person name="Stajich J.E."/>
            <person name="Rounsley S.D."/>
            <person name="Gardner M.J."/>
            <person name="Wortman J.R."/>
            <person name="Jordar V.S."/>
            <person name="Maiti R."/>
            <person name="Kodira C.D."/>
            <person name="Neafsey D.E."/>
            <person name="Zeng Q."/>
            <person name="Hung C.-Y."/>
            <person name="McMahan C."/>
            <person name="Muszewska A."/>
            <person name="Grynberg M."/>
            <person name="Mandel M.A."/>
            <person name="Kellner E.M."/>
            <person name="Barker B.M."/>
            <person name="Galgiani J.N."/>
            <person name="Orbach M.J."/>
            <person name="Kirkland T.N."/>
            <person name="Cole G.T."/>
            <person name="Henn M.R."/>
            <person name="Birren B.W."/>
            <person name="Taylor J.W."/>
        </authorList>
    </citation>
    <scope>NUCLEOTIDE SEQUENCE [LARGE SCALE GENOMIC DNA]</scope>
    <source>
        <strain>NAm1 / WU24</strain>
    </source>
</reference>
<accession>A6QWA0</accession>
<dbReference type="EMBL" id="CH476655">
    <property type="protein sequence ID" value="EDN03792.1"/>
    <property type="molecule type" value="Genomic_DNA"/>
</dbReference>
<dbReference type="SMR" id="A6QWA0"/>
<dbReference type="STRING" id="339724.A6QWA0"/>
<dbReference type="GlyCosmos" id="A6QWA0">
    <property type="glycosylation" value="8 sites, No reported glycans"/>
</dbReference>
<dbReference type="KEGG" id="aje:HCAG_01657"/>
<dbReference type="VEuPathDB" id="FungiDB:HCAG_01657"/>
<dbReference type="HOGENOM" id="CLU_010191_1_0_1"/>
<dbReference type="OMA" id="NVFGWVN"/>
<dbReference type="OrthoDB" id="7761at299071"/>
<dbReference type="Proteomes" id="UP000009297">
    <property type="component" value="Unassembled WGS sequence"/>
</dbReference>
<dbReference type="GO" id="GO:0043332">
    <property type="term" value="C:mating projection tip"/>
    <property type="evidence" value="ECO:0007669"/>
    <property type="project" value="InterPro"/>
</dbReference>
<dbReference type="GO" id="GO:0005886">
    <property type="term" value="C:plasma membrane"/>
    <property type="evidence" value="ECO:0007669"/>
    <property type="project" value="UniProtKB-SubCell"/>
</dbReference>
<dbReference type="GO" id="GO:0032220">
    <property type="term" value="P:plasma membrane fusion involved in cytogamy"/>
    <property type="evidence" value="ECO:0007669"/>
    <property type="project" value="TreeGrafter"/>
</dbReference>
<dbReference type="InterPro" id="IPR026777">
    <property type="entry name" value="PRM1"/>
</dbReference>
<dbReference type="PANTHER" id="PTHR31030">
    <property type="entry name" value="PLASMA MEMBRANE FUSION PROTEIN PRM1"/>
    <property type="match status" value="1"/>
</dbReference>
<dbReference type="PANTHER" id="PTHR31030:SF1">
    <property type="entry name" value="PLASMA MEMBRANE FUSION PROTEIN PRM1"/>
    <property type="match status" value="1"/>
</dbReference>
<protein>
    <recommendedName>
        <fullName>Plasma membrane fusion protein PRM1</fullName>
    </recommendedName>
</protein>
<organism>
    <name type="scientific">Ajellomyces capsulatus (strain NAm1 / WU24)</name>
    <name type="common">Darling's disease fungus</name>
    <name type="synonym">Histoplasma capsulatum</name>
    <dbReference type="NCBI Taxonomy" id="2059318"/>
    <lineage>
        <taxon>Eukaryota</taxon>
        <taxon>Fungi</taxon>
        <taxon>Dikarya</taxon>
        <taxon>Ascomycota</taxon>
        <taxon>Pezizomycotina</taxon>
        <taxon>Eurotiomycetes</taxon>
        <taxon>Eurotiomycetidae</taxon>
        <taxon>Onygenales</taxon>
        <taxon>Ajellomycetaceae</taxon>
        <taxon>Histoplasma</taxon>
    </lineage>
</organism>
<keyword id="KW-1003">Cell membrane</keyword>
<keyword id="KW-0184">Conjugation</keyword>
<keyword id="KW-0325">Glycoprotein</keyword>
<keyword id="KW-0472">Membrane</keyword>
<keyword id="KW-1185">Reference proteome</keyword>
<keyword id="KW-0812">Transmembrane</keyword>
<keyword id="KW-1133">Transmembrane helix</keyword>
<proteinExistence type="inferred from homology"/>
<name>PRM1_AJECN</name>